<organism>
    <name type="scientific">Cytophaga hutchinsonii (strain ATCC 33406 / DSM 1761 / CIP 103989 / NBRC 15051 / NCIMB 9469 / D465)</name>
    <dbReference type="NCBI Taxonomy" id="269798"/>
    <lineage>
        <taxon>Bacteria</taxon>
        <taxon>Pseudomonadati</taxon>
        <taxon>Bacteroidota</taxon>
        <taxon>Cytophagia</taxon>
        <taxon>Cytophagales</taxon>
        <taxon>Cytophagaceae</taxon>
        <taxon>Cytophaga</taxon>
    </lineage>
</organism>
<reference key="1">
    <citation type="journal article" date="2007" name="Appl. Environ. Microbiol.">
        <title>Genome sequence of the cellulolytic gliding bacterium Cytophaga hutchinsonii.</title>
        <authorList>
            <person name="Xie G."/>
            <person name="Bruce D.C."/>
            <person name="Challacombe J.F."/>
            <person name="Chertkov O."/>
            <person name="Detter J.C."/>
            <person name="Gilna P."/>
            <person name="Han C.S."/>
            <person name="Lucas S."/>
            <person name="Misra M."/>
            <person name="Myers G.L."/>
            <person name="Richardson P."/>
            <person name="Tapia R."/>
            <person name="Thayer N."/>
            <person name="Thompson L.S."/>
            <person name="Brettin T.S."/>
            <person name="Henrissat B."/>
            <person name="Wilson D.B."/>
            <person name="McBride M.J."/>
        </authorList>
    </citation>
    <scope>NUCLEOTIDE SEQUENCE [LARGE SCALE GENOMIC DNA]</scope>
    <source>
        <strain>ATCC 33406 / DSM 1761 / JCM 20678 / CIP 103989 / IAM 12607 / NBRC 15051 / NCIMB 9469 / D465</strain>
    </source>
</reference>
<reference key="2">
    <citation type="journal article" date="2003" name="Chem. Biol.">
        <title>NAD biosynthesis: identification of the tryptophan to quinolinate pathway in bacteria.</title>
        <authorList>
            <person name="Kurnasov O."/>
            <person name="Goral V."/>
            <person name="Colabroy K."/>
            <person name="Gerdes S."/>
            <person name="Anantha S."/>
            <person name="Osterman A."/>
            <person name="Begley T.P."/>
        </authorList>
    </citation>
    <scope>FUNCTION</scope>
    <scope>CATALYTIC ACTIVITY</scope>
    <scope>COFACTOR</scope>
    <scope>BIOPHYSICOCHEMICAL PROPERTIES</scope>
</reference>
<name>KMO_CYTH3</name>
<evidence type="ECO:0000255" key="1">
    <source>
        <dbReference type="HAMAP-Rule" id="MF_01971"/>
    </source>
</evidence>
<evidence type="ECO:0000269" key="2">
    <source>
    </source>
</evidence>
<comment type="function">
    <text evidence="1 2">Catalyzes the hydroxylation of L-kynurenine (L-Kyn) to form 3-hydroxy-L-kynurenine (L-3OHKyn). Required for synthesis of quinolinic acid.</text>
</comment>
<comment type="catalytic activity">
    <reaction evidence="1 2">
        <text>L-kynurenine + NADPH + O2 + H(+) = 3-hydroxy-L-kynurenine + NADP(+) + H2O</text>
        <dbReference type="Rhea" id="RHEA:20545"/>
        <dbReference type="ChEBI" id="CHEBI:15377"/>
        <dbReference type="ChEBI" id="CHEBI:15378"/>
        <dbReference type="ChEBI" id="CHEBI:15379"/>
        <dbReference type="ChEBI" id="CHEBI:57783"/>
        <dbReference type="ChEBI" id="CHEBI:57959"/>
        <dbReference type="ChEBI" id="CHEBI:58125"/>
        <dbReference type="ChEBI" id="CHEBI:58349"/>
        <dbReference type="EC" id="1.14.13.9"/>
    </reaction>
</comment>
<comment type="cofactor">
    <cofactor evidence="1">
        <name>FAD</name>
        <dbReference type="ChEBI" id="CHEBI:57692"/>
    </cofactor>
</comment>
<comment type="biophysicochemical properties">
    <kinetics>
        <KM evidence="2">76 uM for L-kynurenine</KM>
        <KM evidence="2">89 uM for NADPH</KM>
    </kinetics>
</comment>
<comment type="pathway">
    <text evidence="1">Cofactor biosynthesis; NAD(+) biosynthesis; quinolinate from L-kynurenine: step 1/3.</text>
</comment>
<comment type="similarity">
    <text evidence="1">Belongs to the aromatic-ring hydroxylase family. KMO subfamily.</text>
</comment>
<proteinExistence type="evidence at protein level"/>
<sequence length="449" mass="50783">MKEQITICGAGLVGSLLAVYLIERGFSVRVFEKRKDPRKNEADAGRSINLAISHRGIHALKDAQTGLEKEALKLAVPMYGRAIHDLHGHVSFQAYGEASQHINSIGRGALNKLLITTAENLGVHFLFEHTCTDYHAAGEQWLFSDITGNTVATQSKEIVIGADGAFSIVRSFLSKQQQPQPQIETLEYGYKELEIASAHTETITNNQALHIWPRERFMLIALPNEDGSYTATLFLPLKGEISFEALQSDQDIQLFFKKYFPDTENLFPDLTEQFYRHPTSKLFTIHSSNWFNAHTLLIGDAAHALVPFYGQGMNAGFEDCRILAEIIDGKSKTNWSEIFAEFYNQRKENADAISDLALQNFIEMRDHVADASFLLRKKIEKHLHQELEDAFIPQYTMVSFTDISYKEAMETGLLHQKILDEIMAIPDIEAAWPTEELKNKVITVTKKYI</sequence>
<protein>
    <recommendedName>
        <fullName evidence="1">Kynurenine 3-monooxygenase</fullName>
        <ecNumber evidence="1">1.14.13.9</ecNumber>
    </recommendedName>
    <alternativeName>
        <fullName evidence="1">Kynurenine 3-hydroxylase</fullName>
    </alternativeName>
</protein>
<accession>Q11PP7</accession>
<keyword id="KW-0274">FAD</keyword>
<keyword id="KW-0285">Flavoprotein</keyword>
<keyword id="KW-0503">Monooxygenase</keyword>
<keyword id="KW-0521">NADP</keyword>
<keyword id="KW-0560">Oxidoreductase</keyword>
<keyword id="KW-0662">Pyridine nucleotide biosynthesis</keyword>
<keyword id="KW-1185">Reference proteome</keyword>
<gene>
    <name evidence="1" type="primary">kmo</name>
    <name type="ordered locus">CHU_3380</name>
</gene>
<feature type="chain" id="PRO_0000361935" description="Kynurenine 3-monooxygenase">
    <location>
        <begin position="1"/>
        <end position="449"/>
    </location>
</feature>
<dbReference type="EC" id="1.14.13.9" evidence="1"/>
<dbReference type="EMBL" id="CP000383">
    <property type="protein sequence ID" value="ABG60616.1"/>
    <property type="molecule type" value="Genomic_DNA"/>
</dbReference>
<dbReference type="RefSeq" id="WP_011586724.1">
    <property type="nucleotide sequence ID" value="NC_008255.1"/>
</dbReference>
<dbReference type="SMR" id="Q11PP7"/>
<dbReference type="STRING" id="269798.CHU_3380"/>
<dbReference type="DNASU" id="4187169"/>
<dbReference type="KEGG" id="chu:CHU_3380"/>
<dbReference type="eggNOG" id="COG0654">
    <property type="taxonomic scope" value="Bacteria"/>
</dbReference>
<dbReference type="HOGENOM" id="CLU_023210_0_1_10"/>
<dbReference type="OrthoDB" id="9766816at2"/>
<dbReference type="BRENDA" id="1.14.13.9">
    <property type="organism ID" value="7214"/>
</dbReference>
<dbReference type="SABIO-RK" id="Q11PP7"/>
<dbReference type="UniPathway" id="UPA00253">
    <property type="reaction ID" value="UER00328"/>
</dbReference>
<dbReference type="Proteomes" id="UP000001822">
    <property type="component" value="Chromosome"/>
</dbReference>
<dbReference type="GO" id="GO:0071949">
    <property type="term" value="F:FAD binding"/>
    <property type="evidence" value="ECO:0007669"/>
    <property type="project" value="InterPro"/>
</dbReference>
<dbReference type="GO" id="GO:0004502">
    <property type="term" value="F:kynurenine 3-monooxygenase activity"/>
    <property type="evidence" value="ECO:0007669"/>
    <property type="project" value="UniProtKB-UniRule"/>
</dbReference>
<dbReference type="GO" id="GO:0043420">
    <property type="term" value="P:anthranilate metabolic process"/>
    <property type="evidence" value="ECO:0007669"/>
    <property type="project" value="UniProtKB-UniRule"/>
</dbReference>
<dbReference type="GO" id="GO:0070189">
    <property type="term" value="P:kynurenine metabolic process"/>
    <property type="evidence" value="ECO:0007669"/>
    <property type="project" value="TreeGrafter"/>
</dbReference>
<dbReference type="GO" id="GO:0006569">
    <property type="term" value="P:L-tryptophan catabolic process"/>
    <property type="evidence" value="ECO:0007669"/>
    <property type="project" value="UniProtKB-UniRule"/>
</dbReference>
<dbReference type="GO" id="GO:0009435">
    <property type="term" value="P:NAD biosynthetic process"/>
    <property type="evidence" value="ECO:0007669"/>
    <property type="project" value="UniProtKB-UniPathway"/>
</dbReference>
<dbReference type="GO" id="GO:0019805">
    <property type="term" value="P:quinolinate biosynthetic process"/>
    <property type="evidence" value="ECO:0007669"/>
    <property type="project" value="UniProtKB-UniRule"/>
</dbReference>
<dbReference type="FunFam" id="3.50.50.60:FF:000185">
    <property type="entry name" value="Kynurenine 3-monooxygenase"/>
    <property type="match status" value="1"/>
</dbReference>
<dbReference type="Gene3D" id="3.50.50.60">
    <property type="entry name" value="FAD/NAD(P)-binding domain"/>
    <property type="match status" value="1"/>
</dbReference>
<dbReference type="HAMAP" id="MF_01971">
    <property type="entry name" value="Kynurenine_monooxygenase"/>
    <property type="match status" value="1"/>
</dbReference>
<dbReference type="InterPro" id="IPR002938">
    <property type="entry name" value="FAD-bd"/>
</dbReference>
<dbReference type="InterPro" id="IPR036188">
    <property type="entry name" value="FAD/NAD-bd_sf"/>
</dbReference>
<dbReference type="InterPro" id="IPR027545">
    <property type="entry name" value="Kynurenine_monooxygenase"/>
</dbReference>
<dbReference type="PANTHER" id="PTHR46028">
    <property type="entry name" value="KYNURENINE 3-MONOOXYGENASE"/>
    <property type="match status" value="1"/>
</dbReference>
<dbReference type="PANTHER" id="PTHR46028:SF2">
    <property type="entry name" value="KYNURENINE 3-MONOOXYGENASE"/>
    <property type="match status" value="1"/>
</dbReference>
<dbReference type="Pfam" id="PF01494">
    <property type="entry name" value="FAD_binding_3"/>
    <property type="match status" value="1"/>
</dbReference>
<dbReference type="PRINTS" id="PR00420">
    <property type="entry name" value="RNGMNOXGNASE"/>
</dbReference>
<dbReference type="SUPFAM" id="SSF51905">
    <property type="entry name" value="FAD/NAD(P)-binding domain"/>
    <property type="match status" value="1"/>
</dbReference>